<keyword id="KW-0028">Amino-acid biosynthesis</keyword>
<keyword id="KW-0057">Aromatic amino acid biosynthesis</keyword>
<keyword id="KW-0210">Decarboxylase</keyword>
<keyword id="KW-0456">Lyase</keyword>
<keyword id="KW-1185">Reference proteome</keyword>
<keyword id="KW-0822">Tryptophan biosynthesis</keyword>
<sequence>MFLEKIVQVRREKVRQAKNKIPFWEMRKMAEEQVSHRLPLSLRQALLRENAKGKVGVIAEIKKASPSKGVLREQLDPEEVAQVYAKSGAAAISVLTEEDYFLGSPEYLKAVRAVVSLPILRKDFILDPYQIYEAKVLGADAVLLITSLLASVELKEMIKITEGLGMEALVEAHSLEEVEKALTAGARLIGINNRDLRTFATNIDVSLKLAPVLKEAGVVMVSESGIRSKEDIKALMTAGYHGILIGEALVRAPDPGKALEVLLA</sequence>
<proteinExistence type="inferred from homology"/>
<accession>Q3ABS1</accession>
<comment type="catalytic activity">
    <reaction evidence="1">
        <text>1-(2-carboxyphenylamino)-1-deoxy-D-ribulose 5-phosphate + H(+) = (1S,2R)-1-C-(indol-3-yl)glycerol 3-phosphate + CO2 + H2O</text>
        <dbReference type="Rhea" id="RHEA:23476"/>
        <dbReference type="ChEBI" id="CHEBI:15377"/>
        <dbReference type="ChEBI" id="CHEBI:15378"/>
        <dbReference type="ChEBI" id="CHEBI:16526"/>
        <dbReference type="ChEBI" id="CHEBI:58613"/>
        <dbReference type="ChEBI" id="CHEBI:58866"/>
        <dbReference type="EC" id="4.1.1.48"/>
    </reaction>
</comment>
<comment type="pathway">
    <text evidence="1">Amino-acid biosynthesis; L-tryptophan biosynthesis; L-tryptophan from chorismate: step 4/5.</text>
</comment>
<comment type="similarity">
    <text evidence="1">Belongs to the TrpC family.</text>
</comment>
<evidence type="ECO:0000255" key="1">
    <source>
        <dbReference type="HAMAP-Rule" id="MF_00134"/>
    </source>
</evidence>
<dbReference type="EC" id="4.1.1.48" evidence="1"/>
<dbReference type="EMBL" id="CP000141">
    <property type="protein sequence ID" value="ABB15044.1"/>
    <property type="molecule type" value="Genomic_DNA"/>
</dbReference>
<dbReference type="RefSeq" id="WP_011344488.1">
    <property type="nucleotide sequence ID" value="NC_007503.1"/>
</dbReference>
<dbReference type="SMR" id="Q3ABS1"/>
<dbReference type="FunCoup" id="Q3ABS1">
    <property type="interactions" value="417"/>
</dbReference>
<dbReference type="STRING" id="246194.CHY_1584"/>
<dbReference type="KEGG" id="chy:CHY_1584"/>
<dbReference type="eggNOG" id="COG0134">
    <property type="taxonomic scope" value="Bacteria"/>
</dbReference>
<dbReference type="HOGENOM" id="CLU_034247_2_0_9"/>
<dbReference type="InParanoid" id="Q3ABS1"/>
<dbReference type="OrthoDB" id="9804217at2"/>
<dbReference type="UniPathway" id="UPA00035">
    <property type="reaction ID" value="UER00043"/>
</dbReference>
<dbReference type="Proteomes" id="UP000002706">
    <property type="component" value="Chromosome"/>
</dbReference>
<dbReference type="GO" id="GO:0004425">
    <property type="term" value="F:indole-3-glycerol-phosphate synthase activity"/>
    <property type="evidence" value="ECO:0007669"/>
    <property type="project" value="UniProtKB-UniRule"/>
</dbReference>
<dbReference type="GO" id="GO:0004640">
    <property type="term" value="F:phosphoribosylanthranilate isomerase activity"/>
    <property type="evidence" value="ECO:0007669"/>
    <property type="project" value="TreeGrafter"/>
</dbReference>
<dbReference type="GO" id="GO:0000162">
    <property type="term" value="P:L-tryptophan biosynthetic process"/>
    <property type="evidence" value="ECO:0007669"/>
    <property type="project" value="UniProtKB-UniRule"/>
</dbReference>
<dbReference type="CDD" id="cd00331">
    <property type="entry name" value="IGPS"/>
    <property type="match status" value="1"/>
</dbReference>
<dbReference type="FunFam" id="3.20.20.70:FF:000024">
    <property type="entry name" value="Indole-3-glycerol phosphate synthase"/>
    <property type="match status" value="1"/>
</dbReference>
<dbReference type="Gene3D" id="3.20.20.70">
    <property type="entry name" value="Aldolase class I"/>
    <property type="match status" value="1"/>
</dbReference>
<dbReference type="HAMAP" id="MF_00134_A">
    <property type="entry name" value="IGPS_A"/>
    <property type="match status" value="1"/>
</dbReference>
<dbReference type="HAMAP" id="MF_00134_B">
    <property type="entry name" value="IGPS_B"/>
    <property type="match status" value="1"/>
</dbReference>
<dbReference type="InterPro" id="IPR013785">
    <property type="entry name" value="Aldolase_TIM"/>
</dbReference>
<dbReference type="InterPro" id="IPR045186">
    <property type="entry name" value="Indole-3-glycerol_P_synth"/>
</dbReference>
<dbReference type="InterPro" id="IPR013798">
    <property type="entry name" value="Indole-3-glycerol_P_synth_dom"/>
</dbReference>
<dbReference type="InterPro" id="IPR001468">
    <property type="entry name" value="Indole-3-GlycerolPSynthase_CS"/>
</dbReference>
<dbReference type="InterPro" id="IPR011060">
    <property type="entry name" value="RibuloseP-bd_barrel"/>
</dbReference>
<dbReference type="NCBIfam" id="NF001377">
    <property type="entry name" value="PRK00278.2-4"/>
    <property type="match status" value="1"/>
</dbReference>
<dbReference type="PANTHER" id="PTHR22854:SF2">
    <property type="entry name" value="INDOLE-3-GLYCEROL-PHOSPHATE SYNTHASE"/>
    <property type="match status" value="1"/>
</dbReference>
<dbReference type="PANTHER" id="PTHR22854">
    <property type="entry name" value="TRYPTOPHAN BIOSYNTHESIS PROTEIN"/>
    <property type="match status" value="1"/>
</dbReference>
<dbReference type="Pfam" id="PF00218">
    <property type="entry name" value="IGPS"/>
    <property type="match status" value="1"/>
</dbReference>
<dbReference type="SUPFAM" id="SSF51366">
    <property type="entry name" value="Ribulose-phoshate binding barrel"/>
    <property type="match status" value="1"/>
</dbReference>
<dbReference type="PROSITE" id="PS00614">
    <property type="entry name" value="IGPS"/>
    <property type="match status" value="1"/>
</dbReference>
<name>TRPC_CARHZ</name>
<reference key="1">
    <citation type="journal article" date="2005" name="PLoS Genet.">
        <title>Life in hot carbon monoxide: the complete genome sequence of Carboxydothermus hydrogenoformans Z-2901.</title>
        <authorList>
            <person name="Wu M."/>
            <person name="Ren Q."/>
            <person name="Durkin A.S."/>
            <person name="Daugherty S.C."/>
            <person name="Brinkac L.M."/>
            <person name="Dodson R.J."/>
            <person name="Madupu R."/>
            <person name="Sullivan S.A."/>
            <person name="Kolonay J.F."/>
            <person name="Nelson W.C."/>
            <person name="Tallon L.J."/>
            <person name="Jones K.M."/>
            <person name="Ulrich L.E."/>
            <person name="Gonzalez J.M."/>
            <person name="Zhulin I.B."/>
            <person name="Robb F.T."/>
            <person name="Eisen J.A."/>
        </authorList>
    </citation>
    <scope>NUCLEOTIDE SEQUENCE [LARGE SCALE GENOMIC DNA]</scope>
    <source>
        <strain>ATCC BAA-161 / DSM 6008 / Z-2901</strain>
    </source>
</reference>
<gene>
    <name evidence="1" type="primary">trpC</name>
    <name type="ordered locus">CHY_1584</name>
</gene>
<protein>
    <recommendedName>
        <fullName evidence="1">Indole-3-glycerol phosphate synthase</fullName>
        <shortName evidence="1">IGPS</shortName>
        <ecNumber evidence="1">4.1.1.48</ecNumber>
    </recommendedName>
</protein>
<feature type="chain" id="PRO_1000018471" description="Indole-3-glycerol phosphate synthase">
    <location>
        <begin position="1"/>
        <end position="264"/>
    </location>
</feature>
<organism>
    <name type="scientific">Carboxydothermus hydrogenoformans (strain ATCC BAA-161 / DSM 6008 / Z-2901)</name>
    <dbReference type="NCBI Taxonomy" id="246194"/>
    <lineage>
        <taxon>Bacteria</taxon>
        <taxon>Bacillati</taxon>
        <taxon>Bacillota</taxon>
        <taxon>Clostridia</taxon>
        <taxon>Thermoanaerobacterales</taxon>
        <taxon>Thermoanaerobacteraceae</taxon>
        <taxon>Carboxydothermus</taxon>
    </lineage>
</organism>